<sequence length="154" mass="17905">MTEVEERINAWNDGFEELLSYIPAKLYYREHTANQWKQKKSTLEEKKERRKMKFSLDGLVNDADDDSQKSSKWEQSSTMSDDTDVSDRHAESMSQIRGKLASKIQDLREKRKAGDLNQKRQNKRPVENEKDSQKGSGKSKVQKKKHKASPRAGF</sequence>
<feature type="chain" id="PRO_0000373875" description="Ribosomal RNA-processing protein 14-N">
    <location>
        <begin position="1"/>
        <end position="154"/>
    </location>
</feature>
<feature type="region of interest" description="Disordered" evidence="2">
    <location>
        <begin position="36"/>
        <end position="154"/>
    </location>
</feature>
<feature type="compositionally biased region" description="Basic and acidic residues" evidence="2">
    <location>
        <begin position="105"/>
        <end position="133"/>
    </location>
</feature>
<feature type="compositionally biased region" description="Basic residues" evidence="2">
    <location>
        <begin position="140"/>
        <end position="154"/>
    </location>
</feature>
<feature type="modified residue" description="Phosphoserine" evidence="4">
    <location>
        <position position="80"/>
    </location>
</feature>
<feature type="modified residue" description="Phosphothreonine" evidence="4">
    <location>
        <position position="83"/>
    </location>
</feature>
<organism>
    <name type="scientific">Schizosaccharomyces pombe (strain 972 / ATCC 24843)</name>
    <name type="common">Fission yeast</name>
    <dbReference type="NCBI Taxonomy" id="284812"/>
    <lineage>
        <taxon>Eukaryota</taxon>
        <taxon>Fungi</taxon>
        <taxon>Dikarya</taxon>
        <taxon>Ascomycota</taxon>
        <taxon>Taphrinomycotina</taxon>
        <taxon>Schizosaccharomycetes</taxon>
        <taxon>Schizosaccharomycetales</taxon>
        <taxon>Schizosaccharomycetaceae</taxon>
        <taxon>Schizosaccharomyces</taxon>
    </lineage>
</organism>
<evidence type="ECO:0000250" key="1"/>
<evidence type="ECO:0000256" key="2">
    <source>
        <dbReference type="SAM" id="MobiDB-lite"/>
    </source>
</evidence>
<evidence type="ECO:0000269" key="3">
    <source>
    </source>
</evidence>
<evidence type="ECO:0000269" key="4">
    <source>
    </source>
</evidence>
<evidence type="ECO:0000305" key="5"/>
<gene>
    <name type="primary">rrp14n</name>
    <name type="ORF">SPAC8C9.10c</name>
</gene>
<name>RR14N_SCHPO</name>
<proteinExistence type="evidence at protein level"/>
<dbReference type="EMBL" id="CU329670">
    <property type="protein sequence ID" value="CAB16298.1"/>
    <property type="molecule type" value="Genomic_DNA"/>
</dbReference>
<dbReference type="PIR" id="T39147">
    <property type="entry name" value="T39147"/>
</dbReference>
<dbReference type="SMR" id="O14279"/>
<dbReference type="BioGRID" id="278772">
    <property type="interactions" value="5"/>
</dbReference>
<dbReference type="FunCoup" id="O14279">
    <property type="interactions" value="88"/>
</dbReference>
<dbReference type="STRING" id="284812.O14279"/>
<dbReference type="iPTMnet" id="O14279"/>
<dbReference type="PaxDb" id="4896-SPAC8C9.10c.1"/>
<dbReference type="EnsemblFungi" id="SPAC8C9.10c.1">
    <property type="protein sequence ID" value="SPAC8C9.10c.1:pep"/>
    <property type="gene ID" value="SPAC8C9.10c"/>
</dbReference>
<dbReference type="KEGG" id="spo:2542305"/>
<dbReference type="PomBase" id="SPAC8C9.10c"/>
<dbReference type="VEuPathDB" id="FungiDB:SPAC8C9.10c"/>
<dbReference type="eggNOG" id="KOG2885">
    <property type="taxonomic scope" value="Eukaryota"/>
</dbReference>
<dbReference type="HOGENOM" id="CLU_145592_0_0_1"/>
<dbReference type="InParanoid" id="O14279"/>
<dbReference type="OMA" id="ESMSQIR"/>
<dbReference type="PRO" id="PR:O14279"/>
<dbReference type="Proteomes" id="UP000002485">
    <property type="component" value="Chromosome I"/>
</dbReference>
<dbReference type="GO" id="GO:0005730">
    <property type="term" value="C:nucleolus"/>
    <property type="evidence" value="ECO:0007005"/>
    <property type="project" value="PomBase"/>
</dbReference>
<dbReference type="GO" id="GO:0005634">
    <property type="term" value="C:nucleus"/>
    <property type="evidence" value="ECO:0007005"/>
    <property type="project" value="PomBase"/>
</dbReference>
<dbReference type="GO" id="GO:0003677">
    <property type="term" value="F:DNA binding"/>
    <property type="evidence" value="ECO:0000318"/>
    <property type="project" value="GO_Central"/>
</dbReference>
<dbReference type="GO" id="GO:0003723">
    <property type="term" value="F:RNA binding"/>
    <property type="evidence" value="ECO:0000318"/>
    <property type="project" value="GO_Central"/>
</dbReference>
<dbReference type="GO" id="GO:0042273">
    <property type="term" value="P:ribosomal large subunit biogenesis"/>
    <property type="evidence" value="ECO:0000318"/>
    <property type="project" value="GO_Central"/>
</dbReference>
<dbReference type="GO" id="GO:0042274">
    <property type="term" value="P:ribosomal small subunit biogenesis"/>
    <property type="evidence" value="ECO:0000318"/>
    <property type="project" value="GO_Central"/>
</dbReference>
<dbReference type="GO" id="GO:0006364">
    <property type="term" value="P:rRNA processing"/>
    <property type="evidence" value="ECO:0007669"/>
    <property type="project" value="UniProtKB-KW"/>
</dbReference>
<dbReference type="InterPro" id="IPR029188">
    <property type="entry name" value="Rrp14_N"/>
</dbReference>
<dbReference type="Pfam" id="PF15459">
    <property type="entry name" value="RRP14"/>
    <property type="match status" value="1"/>
</dbReference>
<accession>O14279</accession>
<comment type="function">
    <text evidence="1">Involved in ribosome biogenesis and cell polarity. Required for the synthesis of both 40S and 60S ribosomal subunits and may also play some direct role in correct positioning of the mitotic spindle during mitosis (By similarity).</text>
</comment>
<comment type="subcellular location">
    <subcellularLocation>
        <location evidence="3">Nucleus</location>
        <location evidence="3">Nucleolus</location>
    </subcellularLocation>
</comment>
<comment type="similarity">
    <text evidence="5">Belongs to the SURF6 family.</text>
</comment>
<keyword id="KW-0539">Nucleus</keyword>
<keyword id="KW-0597">Phosphoprotein</keyword>
<keyword id="KW-1185">Reference proteome</keyword>
<keyword id="KW-0690">Ribosome biogenesis</keyword>
<keyword id="KW-0698">rRNA processing</keyword>
<protein>
    <recommendedName>
        <fullName>Ribosomal RNA-processing protein 14-N</fullName>
    </recommendedName>
    <alternativeName>
        <fullName>Ribosome biogenesis protein rrp14-N</fullName>
    </alternativeName>
</protein>
<reference key="1">
    <citation type="journal article" date="2002" name="Nature">
        <title>The genome sequence of Schizosaccharomyces pombe.</title>
        <authorList>
            <person name="Wood V."/>
            <person name="Gwilliam R."/>
            <person name="Rajandream M.A."/>
            <person name="Lyne M.H."/>
            <person name="Lyne R."/>
            <person name="Stewart A."/>
            <person name="Sgouros J.G."/>
            <person name="Peat N."/>
            <person name="Hayles J."/>
            <person name="Baker S.G."/>
            <person name="Basham D."/>
            <person name="Bowman S."/>
            <person name="Brooks K."/>
            <person name="Brown D."/>
            <person name="Brown S."/>
            <person name="Chillingworth T."/>
            <person name="Churcher C.M."/>
            <person name="Collins M."/>
            <person name="Connor R."/>
            <person name="Cronin A."/>
            <person name="Davis P."/>
            <person name="Feltwell T."/>
            <person name="Fraser A."/>
            <person name="Gentles S."/>
            <person name="Goble A."/>
            <person name="Hamlin N."/>
            <person name="Harris D.E."/>
            <person name="Hidalgo J."/>
            <person name="Hodgson G."/>
            <person name="Holroyd S."/>
            <person name="Hornsby T."/>
            <person name="Howarth S."/>
            <person name="Huckle E.J."/>
            <person name="Hunt S."/>
            <person name="Jagels K."/>
            <person name="James K.D."/>
            <person name="Jones L."/>
            <person name="Jones M."/>
            <person name="Leather S."/>
            <person name="McDonald S."/>
            <person name="McLean J."/>
            <person name="Mooney P."/>
            <person name="Moule S."/>
            <person name="Mungall K.L."/>
            <person name="Murphy L.D."/>
            <person name="Niblett D."/>
            <person name="Odell C."/>
            <person name="Oliver K."/>
            <person name="O'Neil S."/>
            <person name="Pearson D."/>
            <person name="Quail M.A."/>
            <person name="Rabbinowitsch E."/>
            <person name="Rutherford K.M."/>
            <person name="Rutter S."/>
            <person name="Saunders D."/>
            <person name="Seeger K."/>
            <person name="Sharp S."/>
            <person name="Skelton J."/>
            <person name="Simmonds M.N."/>
            <person name="Squares R."/>
            <person name="Squares S."/>
            <person name="Stevens K."/>
            <person name="Taylor K."/>
            <person name="Taylor R.G."/>
            <person name="Tivey A."/>
            <person name="Walsh S.V."/>
            <person name="Warren T."/>
            <person name="Whitehead S."/>
            <person name="Woodward J.R."/>
            <person name="Volckaert G."/>
            <person name="Aert R."/>
            <person name="Robben J."/>
            <person name="Grymonprez B."/>
            <person name="Weltjens I."/>
            <person name="Vanstreels E."/>
            <person name="Rieger M."/>
            <person name="Schaefer M."/>
            <person name="Mueller-Auer S."/>
            <person name="Gabel C."/>
            <person name="Fuchs M."/>
            <person name="Duesterhoeft A."/>
            <person name="Fritzc C."/>
            <person name="Holzer E."/>
            <person name="Moestl D."/>
            <person name="Hilbert H."/>
            <person name="Borzym K."/>
            <person name="Langer I."/>
            <person name="Beck A."/>
            <person name="Lehrach H."/>
            <person name="Reinhardt R."/>
            <person name="Pohl T.M."/>
            <person name="Eger P."/>
            <person name="Zimmermann W."/>
            <person name="Wedler H."/>
            <person name="Wambutt R."/>
            <person name="Purnelle B."/>
            <person name="Goffeau A."/>
            <person name="Cadieu E."/>
            <person name="Dreano S."/>
            <person name="Gloux S."/>
            <person name="Lelaure V."/>
            <person name="Mottier S."/>
            <person name="Galibert F."/>
            <person name="Aves S.J."/>
            <person name="Xiang Z."/>
            <person name="Hunt C."/>
            <person name="Moore K."/>
            <person name="Hurst S.M."/>
            <person name="Lucas M."/>
            <person name="Rochet M."/>
            <person name="Gaillardin C."/>
            <person name="Tallada V.A."/>
            <person name="Garzon A."/>
            <person name="Thode G."/>
            <person name="Daga R.R."/>
            <person name="Cruzado L."/>
            <person name="Jimenez J."/>
            <person name="Sanchez M."/>
            <person name="del Rey F."/>
            <person name="Benito J."/>
            <person name="Dominguez A."/>
            <person name="Revuelta J.L."/>
            <person name="Moreno S."/>
            <person name="Armstrong J."/>
            <person name="Forsburg S.L."/>
            <person name="Cerutti L."/>
            <person name="Lowe T."/>
            <person name="McCombie W.R."/>
            <person name="Paulsen I."/>
            <person name="Potashkin J."/>
            <person name="Shpakovski G.V."/>
            <person name="Ussery D."/>
            <person name="Barrell B.G."/>
            <person name="Nurse P."/>
        </authorList>
    </citation>
    <scope>NUCLEOTIDE SEQUENCE [LARGE SCALE GENOMIC DNA]</scope>
    <source>
        <strain>972 / ATCC 24843</strain>
    </source>
</reference>
<reference key="2">
    <citation type="journal article" date="2006" name="Nat. Biotechnol.">
        <title>ORFeome cloning and global analysis of protein localization in the fission yeast Schizosaccharomyces pombe.</title>
        <authorList>
            <person name="Matsuyama A."/>
            <person name="Arai R."/>
            <person name="Yashiroda Y."/>
            <person name="Shirai A."/>
            <person name="Kamata A."/>
            <person name="Sekido S."/>
            <person name="Kobayashi Y."/>
            <person name="Hashimoto A."/>
            <person name="Hamamoto M."/>
            <person name="Hiraoka Y."/>
            <person name="Horinouchi S."/>
            <person name="Yoshida M."/>
        </authorList>
    </citation>
    <scope>SUBCELLULAR LOCATION [LARGE SCALE ANALYSIS]</scope>
</reference>
<reference key="3">
    <citation type="journal article" date="2008" name="J. Proteome Res.">
        <title>Phosphoproteome analysis of fission yeast.</title>
        <authorList>
            <person name="Wilson-Grady J.T."/>
            <person name="Villen J."/>
            <person name="Gygi S.P."/>
        </authorList>
    </citation>
    <scope>PHOSPHORYLATION [LARGE SCALE ANALYSIS] AT SER-80 AND THR-83</scope>
    <scope>IDENTIFICATION BY MASS SPECTROMETRY</scope>
</reference>